<organism>
    <name type="scientific">Aeromonas salmonicida (strain A449)</name>
    <dbReference type="NCBI Taxonomy" id="382245"/>
    <lineage>
        <taxon>Bacteria</taxon>
        <taxon>Pseudomonadati</taxon>
        <taxon>Pseudomonadota</taxon>
        <taxon>Gammaproteobacteria</taxon>
        <taxon>Aeromonadales</taxon>
        <taxon>Aeromonadaceae</taxon>
        <taxon>Aeromonas</taxon>
    </lineage>
</organism>
<sequence>MRLCDTDIERHLDEGKIVIEPRPGVERISGVSVDVLLGNEFRVFRDHTAPYIDLSGPNSEMADAIDRVMSDEIHIPDGEAFYLHPGQLALAVTYESVTLPADIVGWLDGRSSLARLGLMVHVTAHRIDPGWSGRIVLEFYNGGKLPLALRPKMKIGALNFEMLSGPAARPYNKRENAKYKSQQGAVASRINQD</sequence>
<keyword id="KW-0378">Hydrolase</keyword>
<keyword id="KW-0546">Nucleotide metabolism</keyword>
<keyword id="KW-0547">Nucleotide-binding</keyword>
<protein>
    <recommendedName>
        <fullName evidence="1">dCTP deaminase</fullName>
        <ecNumber evidence="1">3.5.4.13</ecNumber>
    </recommendedName>
    <alternativeName>
        <fullName evidence="1">Deoxycytidine triphosphate deaminase</fullName>
    </alternativeName>
</protein>
<dbReference type="EC" id="3.5.4.13" evidence="1"/>
<dbReference type="EMBL" id="CP000644">
    <property type="protein sequence ID" value="ABO90134.1"/>
    <property type="molecule type" value="Genomic_DNA"/>
</dbReference>
<dbReference type="RefSeq" id="WP_005311470.1">
    <property type="nucleotide sequence ID" value="NC_009348.1"/>
</dbReference>
<dbReference type="SMR" id="A4SML2"/>
<dbReference type="STRING" id="29491.GCA_000820065_00676"/>
<dbReference type="GeneID" id="79879909"/>
<dbReference type="KEGG" id="asa:ASA_2067"/>
<dbReference type="eggNOG" id="COG0717">
    <property type="taxonomic scope" value="Bacteria"/>
</dbReference>
<dbReference type="HOGENOM" id="CLU_087476_2_0_6"/>
<dbReference type="UniPathway" id="UPA00610">
    <property type="reaction ID" value="UER00665"/>
</dbReference>
<dbReference type="Proteomes" id="UP000000225">
    <property type="component" value="Chromosome"/>
</dbReference>
<dbReference type="GO" id="GO:0008829">
    <property type="term" value="F:dCTP deaminase activity"/>
    <property type="evidence" value="ECO:0007669"/>
    <property type="project" value="UniProtKB-UniRule"/>
</dbReference>
<dbReference type="GO" id="GO:0000166">
    <property type="term" value="F:nucleotide binding"/>
    <property type="evidence" value="ECO:0007669"/>
    <property type="project" value="UniProtKB-KW"/>
</dbReference>
<dbReference type="GO" id="GO:0006226">
    <property type="term" value="P:dUMP biosynthetic process"/>
    <property type="evidence" value="ECO:0007669"/>
    <property type="project" value="UniProtKB-UniPathway"/>
</dbReference>
<dbReference type="GO" id="GO:0006229">
    <property type="term" value="P:dUTP biosynthetic process"/>
    <property type="evidence" value="ECO:0007669"/>
    <property type="project" value="UniProtKB-UniRule"/>
</dbReference>
<dbReference type="GO" id="GO:0015949">
    <property type="term" value="P:nucleobase-containing small molecule interconversion"/>
    <property type="evidence" value="ECO:0007669"/>
    <property type="project" value="TreeGrafter"/>
</dbReference>
<dbReference type="CDD" id="cd07557">
    <property type="entry name" value="trimeric_dUTPase"/>
    <property type="match status" value="1"/>
</dbReference>
<dbReference type="FunFam" id="2.70.40.10:FF:000003">
    <property type="entry name" value="dCTP deaminase"/>
    <property type="match status" value="1"/>
</dbReference>
<dbReference type="Gene3D" id="2.70.40.10">
    <property type="match status" value="1"/>
</dbReference>
<dbReference type="HAMAP" id="MF_00146">
    <property type="entry name" value="dCTP_deaminase"/>
    <property type="match status" value="1"/>
</dbReference>
<dbReference type="InterPro" id="IPR011962">
    <property type="entry name" value="dCTP_deaminase"/>
</dbReference>
<dbReference type="InterPro" id="IPR036157">
    <property type="entry name" value="dUTPase-like_sf"/>
</dbReference>
<dbReference type="InterPro" id="IPR033704">
    <property type="entry name" value="dUTPase_trimeric"/>
</dbReference>
<dbReference type="NCBIfam" id="TIGR02274">
    <property type="entry name" value="dCTP_deam"/>
    <property type="match status" value="1"/>
</dbReference>
<dbReference type="PANTHER" id="PTHR42680">
    <property type="entry name" value="DCTP DEAMINASE"/>
    <property type="match status" value="1"/>
</dbReference>
<dbReference type="PANTHER" id="PTHR42680:SF3">
    <property type="entry name" value="DCTP DEAMINASE"/>
    <property type="match status" value="1"/>
</dbReference>
<dbReference type="Pfam" id="PF22769">
    <property type="entry name" value="DCD"/>
    <property type="match status" value="1"/>
</dbReference>
<dbReference type="SUPFAM" id="SSF51283">
    <property type="entry name" value="dUTPase-like"/>
    <property type="match status" value="1"/>
</dbReference>
<reference key="1">
    <citation type="journal article" date="2008" name="BMC Genomics">
        <title>The genome of Aeromonas salmonicida subsp. salmonicida A449: insights into the evolution of a fish pathogen.</title>
        <authorList>
            <person name="Reith M.E."/>
            <person name="Singh R.K."/>
            <person name="Curtis B."/>
            <person name="Boyd J.M."/>
            <person name="Bouevitch A."/>
            <person name="Kimball J."/>
            <person name="Munholland J."/>
            <person name="Murphy C."/>
            <person name="Sarty D."/>
            <person name="Williams J."/>
            <person name="Nash J.H."/>
            <person name="Johnson S.C."/>
            <person name="Brown L.L."/>
        </authorList>
    </citation>
    <scope>NUCLEOTIDE SEQUENCE [LARGE SCALE GENOMIC DNA]</scope>
    <source>
        <strain>A449</strain>
    </source>
</reference>
<gene>
    <name evidence="1" type="primary">dcd</name>
    <name type="ordered locus">ASA_2067</name>
</gene>
<proteinExistence type="inferred from homology"/>
<comment type="function">
    <text evidence="1">Catalyzes the deamination of dCTP to dUTP.</text>
</comment>
<comment type="catalytic activity">
    <reaction evidence="1">
        <text>dCTP + H2O + H(+) = dUTP + NH4(+)</text>
        <dbReference type="Rhea" id="RHEA:22680"/>
        <dbReference type="ChEBI" id="CHEBI:15377"/>
        <dbReference type="ChEBI" id="CHEBI:15378"/>
        <dbReference type="ChEBI" id="CHEBI:28938"/>
        <dbReference type="ChEBI" id="CHEBI:61481"/>
        <dbReference type="ChEBI" id="CHEBI:61555"/>
        <dbReference type="EC" id="3.5.4.13"/>
    </reaction>
</comment>
<comment type="pathway">
    <text evidence="1">Pyrimidine metabolism; dUMP biosynthesis; dUMP from dCTP (dUTP route): step 1/2.</text>
</comment>
<comment type="subunit">
    <text evidence="1">Homotrimer.</text>
</comment>
<comment type="similarity">
    <text evidence="1">Belongs to the dCTP deaminase family.</text>
</comment>
<evidence type="ECO:0000255" key="1">
    <source>
        <dbReference type="HAMAP-Rule" id="MF_00146"/>
    </source>
</evidence>
<feature type="chain" id="PRO_1000009674" description="dCTP deaminase">
    <location>
        <begin position="1"/>
        <end position="193"/>
    </location>
</feature>
<feature type="active site" description="Proton donor/acceptor" evidence="1">
    <location>
        <position position="138"/>
    </location>
</feature>
<feature type="binding site" evidence="1">
    <location>
        <begin position="110"/>
        <end position="115"/>
    </location>
    <ligand>
        <name>dCTP</name>
        <dbReference type="ChEBI" id="CHEBI:61481"/>
    </ligand>
</feature>
<feature type="binding site" evidence="1">
    <location>
        <position position="128"/>
    </location>
    <ligand>
        <name>dCTP</name>
        <dbReference type="ChEBI" id="CHEBI:61481"/>
    </ligand>
</feature>
<feature type="binding site" evidence="1">
    <location>
        <begin position="136"/>
        <end position="138"/>
    </location>
    <ligand>
        <name>dCTP</name>
        <dbReference type="ChEBI" id="CHEBI:61481"/>
    </ligand>
</feature>
<feature type="binding site" evidence="1">
    <location>
        <position position="171"/>
    </location>
    <ligand>
        <name>dCTP</name>
        <dbReference type="ChEBI" id="CHEBI:61481"/>
    </ligand>
</feature>
<feature type="binding site" evidence="1">
    <location>
        <position position="178"/>
    </location>
    <ligand>
        <name>dCTP</name>
        <dbReference type="ChEBI" id="CHEBI:61481"/>
    </ligand>
</feature>
<feature type="binding site" evidence="1">
    <location>
        <position position="182"/>
    </location>
    <ligand>
        <name>dCTP</name>
        <dbReference type="ChEBI" id="CHEBI:61481"/>
    </ligand>
</feature>
<accession>A4SML2</accession>
<name>DCD_AERS4</name>